<proteinExistence type="inferred from homology"/>
<feature type="chain" id="PRO_1000060915" description="L-arabinose isomerase">
    <location>
        <begin position="1"/>
        <end position="501"/>
    </location>
</feature>
<feature type="binding site" evidence="1">
    <location>
        <position position="306"/>
    </location>
    <ligand>
        <name>Mn(2+)</name>
        <dbReference type="ChEBI" id="CHEBI:29035"/>
    </ligand>
</feature>
<feature type="binding site" evidence="1">
    <location>
        <position position="333"/>
    </location>
    <ligand>
        <name>Mn(2+)</name>
        <dbReference type="ChEBI" id="CHEBI:29035"/>
    </ligand>
</feature>
<feature type="binding site" evidence="1">
    <location>
        <position position="350"/>
    </location>
    <ligand>
        <name>Mn(2+)</name>
        <dbReference type="ChEBI" id="CHEBI:29035"/>
    </ligand>
</feature>
<feature type="binding site" evidence="1">
    <location>
        <position position="450"/>
    </location>
    <ligand>
        <name>Mn(2+)</name>
        <dbReference type="ChEBI" id="CHEBI:29035"/>
    </ligand>
</feature>
<evidence type="ECO:0000255" key="1">
    <source>
        <dbReference type="HAMAP-Rule" id="MF_00519"/>
    </source>
</evidence>
<sequence>MNAFKQREVWFAIGSQHLYGPQTLQQVKAHAEQVVDSLNREAGLPVKLVLKPLVTTPDEITALCRDANYQPQCIGILAWLHTFSPAKMWIAGLSVLHKPLLQFHTQFNAQVPWDSMDMDFMNLNQTAHGGREFGFIGARMRQQHSVIAGHWQDPEAHRRIGQWMRVASAKQAGQQLKVARFGDNMREVAVTDGDKVGAQIQFGYSVNAYGIGDLVSVINEVSRGDVDTLIEEYEASYVLSDAAKINGAKRENLTDAARIELGMKRFLEQGNFQAFTTNFEDLHGMKQLPGLAVQRLMQQGYGFGGEGDWKTAALLRILKVMADGLHGGTSFMEDYTYHFQPGNDLVVGSHMLEVCPSIAREPKPLLDIQPLGIGGKADPARLIFSTPAGPAVNASLIDMGDRFRLLVNQVDTVEQPHPLPKLPVARAIWRAQPTLATAAEAWILAGGAHHTVFSQALDADMLRLYAEMHNIEFLLIDQDTTLPAFKNELRWNEAYYQLNRR</sequence>
<organism>
    <name type="scientific">Serratia proteamaculans (strain 568)</name>
    <dbReference type="NCBI Taxonomy" id="399741"/>
    <lineage>
        <taxon>Bacteria</taxon>
        <taxon>Pseudomonadati</taxon>
        <taxon>Pseudomonadota</taxon>
        <taxon>Gammaproteobacteria</taxon>
        <taxon>Enterobacterales</taxon>
        <taxon>Yersiniaceae</taxon>
        <taxon>Serratia</taxon>
    </lineage>
</organism>
<gene>
    <name evidence="1" type="primary">araA</name>
    <name type="ordered locus">Spro_2243</name>
</gene>
<accession>A8GE04</accession>
<reference key="1">
    <citation type="submission" date="2007-09" db="EMBL/GenBank/DDBJ databases">
        <title>Complete sequence of chromosome of Serratia proteamaculans 568.</title>
        <authorList>
            <consortium name="US DOE Joint Genome Institute"/>
            <person name="Copeland A."/>
            <person name="Lucas S."/>
            <person name="Lapidus A."/>
            <person name="Barry K."/>
            <person name="Glavina del Rio T."/>
            <person name="Dalin E."/>
            <person name="Tice H."/>
            <person name="Pitluck S."/>
            <person name="Chain P."/>
            <person name="Malfatti S."/>
            <person name="Shin M."/>
            <person name="Vergez L."/>
            <person name="Schmutz J."/>
            <person name="Larimer F."/>
            <person name="Land M."/>
            <person name="Hauser L."/>
            <person name="Kyrpides N."/>
            <person name="Kim E."/>
            <person name="Taghavi S."/>
            <person name="Newman L."/>
            <person name="Vangronsveld J."/>
            <person name="van der Lelie D."/>
            <person name="Richardson P."/>
        </authorList>
    </citation>
    <scope>NUCLEOTIDE SEQUENCE [LARGE SCALE GENOMIC DNA]</scope>
    <source>
        <strain>568</strain>
    </source>
</reference>
<name>ARAA_SERP5</name>
<keyword id="KW-0054">Arabinose catabolism</keyword>
<keyword id="KW-0119">Carbohydrate metabolism</keyword>
<keyword id="KW-0413">Isomerase</keyword>
<keyword id="KW-0464">Manganese</keyword>
<keyword id="KW-0479">Metal-binding</keyword>
<dbReference type="EC" id="5.3.1.4" evidence="1"/>
<dbReference type="EMBL" id="CP000826">
    <property type="protein sequence ID" value="ABV41344.1"/>
    <property type="molecule type" value="Genomic_DNA"/>
</dbReference>
<dbReference type="SMR" id="A8GE04"/>
<dbReference type="STRING" id="399741.Spro_2243"/>
<dbReference type="KEGG" id="spe:Spro_2243"/>
<dbReference type="eggNOG" id="COG2160">
    <property type="taxonomic scope" value="Bacteria"/>
</dbReference>
<dbReference type="HOGENOM" id="CLU_045663_0_0_6"/>
<dbReference type="OrthoDB" id="9765600at2"/>
<dbReference type="UniPathway" id="UPA00145">
    <property type="reaction ID" value="UER00565"/>
</dbReference>
<dbReference type="GO" id="GO:0005829">
    <property type="term" value="C:cytosol"/>
    <property type="evidence" value="ECO:0007669"/>
    <property type="project" value="TreeGrafter"/>
</dbReference>
<dbReference type="GO" id="GO:0008733">
    <property type="term" value="F:L-arabinose isomerase activity"/>
    <property type="evidence" value="ECO:0007669"/>
    <property type="project" value="UniProtKB-UniRule"/>
</dbReference>
<dbReference type="GO" id="GO:0030145">
    <property type="term" value="F:manganese ion binding"/>
    <property type="evidence" value="ECO:0007669"/>
    <property type="project" value="UniProtKB-UniRule"/>
</dbReference>
<dbReference type="GO" id="GO:0019569">
    <property type="term" value="P:L-arabinose catabolic process to xylulose 5-phosphate"/>
    <property type="evidence" value="ECO:0007669"/>
    <property type="project" value="UniProtKB-UniRule"/>
</dbReference>
<dbReference type="CDD" id="cd03557">
    <property type="entry name" value="L-arabinose_isomerase"/>
    <property type="match status" value="1"/>
</dbReference>
<dbReference type="FunFam" id="3.40.50.10940:FF:000001">
    <property type="entry name" value="L-arabinose isomerase"/>
    <property type="match status" value="1"/>
</dbReference>
<dbReference type="Gene3D" id="3.40.50.10940">
    <property type="match status" value="1"/>
</dbReference>
<dbReference type="HAMAP" id="MF_00519">
    <property type="entry name" value="Arabinose_Isome"/>
    <property type="match status" value="1"/>
</dbReference>
<dbReference type="InterPro" id="IPR024664">
    <property type="entry name" value="Ara_Isoase_C"/>
</dbReference>
<dbReference type="InterPro" id="IPR055390">
    <property type="entry name" value="AraA_central"/>
</dbReference>
<dbReference type="InterPro" id="IPR055389">
    <property type="entry name" value="AraA_N"/>
</dbReference>
<dbReference type="InterPro" id="IPR038583">
    <property type="entry name" value="AraA_N_sf"/>
</dbReference>
<dbReference type="InterPro" id="IPR004216">
    <property type="entry name" value="Fuc/Ara_isomerase_C"/>
</dbReference>
<dbReference type="InterPro" id="IPR009015">
    <property type="entry name" value="Fucose_isomerase_N/cen_sf"/>
</dbReference>
<dbReference type="InterPro" id="IPR003762">
    <property type="entry name" value="Lara_isomerase"/>
</dbReference>
<dbReference type="NCBIfam" id="NF002795">
    <property type="entry name" value="PRK02929.1"/>
    <property type="match status" value="1"/>
</dbReference>
<dbReference type="PANTHER" id="PTHR38464">
    <property type="entry name" value="L-ARABINOSE ISOMERASE"/>
    <property type="match status" value="1"/>
</dbReference>
<dbReference type="PANTHER" id="PTHR38464:SF1">
    <property type="entry name" value="L-ARABINOSE ISOMERASE"/>
    <property type="match status" value="1"/>
</dbReference>
<dbReference type="Pfam" id="PF24856">
    <property type="entry name" value="AraA_central"/>
    <property type="match status" value="1"/>
</dbReference>
<dbReference type="Pfam" id="PF02610">
    <property type="entry name" value="AraA_N"/>
    <property type="match status" value="1"/>
</dbReference>
<dbReference type="Pfam" id="PF11762">
    <property type="entry name" value="Arabinose_Iso_C"/>
    <property type="match status" value="1"/>
</dbReference>
<dbReference type="PIRSF" id="PIRSF001478">
    <property type="entry name" value="L-ara_isomerase"/>
    <property type="match status" value="1"/>
</dbReference>
<dbReference type="SUPFAM" id="SSF50443">
    <property type="entry name" value="FucI/AraA C-terminal domain-like"/>
    <property type="match status" value="1"/>
</dbReference>
<dbReference type="SUPFAM" id="SSF53743">
    <property type="entry name" value="FucI/AraA N-terminal and middle domains"/>
    <property type="match status" value="1"/>
</dbReference>
<comment type="function">
    <text evidence="1">Catalyzes the conversion of L-arabinose to L-ribulose.</text>
</comment>
<comment type="catalytic activity">
    <reaction evidence="1">
        <text>beta-L-arabinopyranose = L-ribulose</text>
        <dbReference type="Rhea" id="RHEA:14821"/>
        <dbReference type="ChEBI" id="CHEBI:16880"/>
        <dbReference type="ChEBI" id="CHEBI:40886"/>
        <dbReference type="EC" id="5.3.1.4"/>
    </reaction>
</comment>
<comment type="cofactor">
    <cofactor evidence="1">
        <name>Mn(2+)</name>
        <dbReference type="ChEBI" id="CHEBI:29035"/>
    </cofactor>
    <text evidence="1">Binds 1 Mn(2+) ion per subunit.</text>
</comment>
<comment type="pathway">
    <text evidence="1">Carbohydrate degradation; L-arabinose degradation via L-ribulose; D-xylulose 5-phosphate from L-arabinose (bacterial route): step 1/3.</text>
</comment>
<comment type="subunit">
    <text evidence="1">Homohexamer.</text>
</comment>
<comment type="similarity">
    <text evidence="1">Belongs to the arabinose isomerase family.</text>
</comment>
<protein>
    <recommendedName>
        <fullName evidence="1">L-arabinose isomerase</fullName>
        <ecNumber evidence="1">5.3.1.4</ecNumber>
    </recommendedName>
</protein>